<name>ILVH_NICPL</name>
<sequence>MEHIQTRTTLSQLSTLPSDKRLGAIRFKCLLVMKVEMINRIAGVFARRGYNIESLAVGLNKDKALFTIVVSGTERVLQQVMEQLQKLVNVIKVEDLSKEPQVERELMLIKISADPKYRAEVMWLVDVFRAKIVDISDQSLTIEVTGDPGKMVAVQRNLSKFGIREIARTGKIALRREKMGESAPFWRFSAASYPDLEGAMSAGTISRTIKRTPNGESMSMAEGDVYPVETDDNSGVSQVLDAHWGVLNDEDTSGLRSHTLSMLVNDTPGVLNIVTGVFARRGYNIQSLAVGHAEVEGLSRITTVVPGTDESVSKLVQQLYKLVDIHEVRDITHLPFAERELMLIKIAVNAAARRNVLDIASIFRAKAVDVSDHTITLELTGDLHKMVRLQRLLEPYGICEVARTDVWHWYVNQVWIRSTCEDIHTLCSLKSSNLRKIPALCGMCANVDD</sequence>
<reference key="1">
    <citation type="journal article" date="1999" name="Plant Mol. Biol.">
        <title>Cloning and functional expression of the small subunit of acetolactate synthase from Nicotiana plumbaginifolia.</title>
        <authorList>
            <person name="Hershey H.P."/>
            <person name="Schwartz L.J."/>
            <person name="Gale J.P."/>
            <person name="Abell L.M."/>
        </authorList>
    </citation>
    <scope>NUCLEOTIDE SEQUENCE [MRNA]</scope>
    <scope>FUNCTION</scope>
</reference>
<protein>
    <recommendedName>
        <fullName>Acetolactate synthase small subunit 1, chloroplastic</fullName>
    </recommendedName>
    <alternativeName>
        <fullName>Acetohydroxy-acid synthase small subunit</fullName>
        <shortName>AHAS</shortName>
        <shortName>ALS</shortName>
    </alternativeName>
</protein>
<feature type="transit peptide" description="Chloroplast" evidence="2">
    <location>
        <begin position="1"/>
        <end position="30"/>
    </location>
</feature>
<feature type="chain" id="PRO_0000420832" description="Acetolactate synthase small subunit 1, chloroplastic">
    <location>
        <begin position="31"/>
        <end position="449"/>
    </location>
</feature>
<feature type="domain" description="ACT 1" evidence="3">
    <location>
        <begin position="31"/>
        <end position="98"/>
    </location>
</feature>
<feature type="domain" description="ACT 2" evidence="3">
    <location>
        <begin position="259"/>
        <end position="333"/>
    </location>
</feature>
<dbReference type="EMBL" id="AJ234901">
    <property type="protein sequence ID" value="CAB56614.1"/>
    <property type="molecule type" value="mRNA"/>
</dbReference>
<dbReference type="SMR" id="Q9SMC2"/>
<dbReference type="UniPathway" id="UPA00047">
    <property type="reaction ID" value="UER00055"/>
</dbReference>
<dbReference type="UniPathway" id="UPA00049">
    <property type="reaction ID" value="UER00059"/>
</dbReference>
<dbReference type="GO" id="GO:0009507">
    <property type="term" value="C:chloroplast"/>
    <property type="evidence" value="ECO:0007669"/>
    <property type="project" value="UniProtKB-SubCell"/>
</dbReference>
<dbReference type="GO" id="GO:0005829">
    <property type="term" value="C:cytosol"/>
    <property type="evidence" value="ECO:0007669"/>
    <property type="project" value="TreeGrafter"/>
</dbReference>
<dbReference type="GO" id="GO:0003984">
    <property type="term" value="F:acetolactate synthase activity"/>
    <property type="evidence" value="ECO:0007669"/>
    <property type="project" value="TreeGrafter"/>
</dbReference>
<dbReference type="GO" id="GO:1990610">
    <property type="term" value="F:acetolactate synthase regulator activity"/>
    <property type="evidence" value="ECO:0007669"/>
    <property type="project" value="InterPro"/>
</dbReference>
<dbReference type="GO" id="GO:0009097">
    <property type="term" value="P:isoleucine biosynthetic process"/>
    <property type="evidence" value="ECO:0007669"/>
    <property type="project" value="UniProtKB-UniPathway"/>
</dbReference>
<dbReference type="GO" id="GO:0009099">
    <property type="term" value="P:L-valine biosynthetic process"/>
    <property type="evidence" value="ECO:0007669"/>
    <property type="project" value="UniProtKB-UniPathway"/>
</dbReference>
<dbReference type="CDD" id="cd04878">
    <property type="entry name" value="ACT_AHAS"/>
    <property type="match status" value="2"/>
</dbReference>
<dbReference type="FunFam" id="3.30.70.1150:FF:000001">
    <property type="entry name" value="Acetolactate synthase small subunit"/>
    <property type="match status" value="1"/>
</dbReference>
<dbReference type="FunFam" id="3.30.70.260:FF:000001">
    <property type="entry name" value="Acetolactate synthase, small subunit"/>
    <property type="match status" value="1"/>
</dbReference>
<dbReference type="Gene3D" id="3.30.70.260">
    <property type="match status" value="2"/>
</dbReference>
<dbReference type="Gene3D" id="3.30.70.1150">
    <property type="entry name" value="ACT-like. Chain A, domain 2"/>
    <property type="match status" value="2"/>
</dbReference>
<dbReference type="InterPro" id="IPR004789">
    <property type="entry name" value="Acetalactate_synth_ssu"/>
</dbReference>
<dbReference type="InterPro" id="IPR027271">
    <property type="entry name" value="Acetolactate_synth/TF_NikR_C"/>
</dbReference>
<dbReference type="InterPro" id="IPR019455">
    <property type="entry name" value="Acetolactate_synth_ssu_C"/>
</dbReference>
<dbReference type="InterPro" id="IPR045865">
    <property type="entry name" value="ACT-like_dom_sf"/>
</dbReference>
<dbReference type="InterPro" id="IPR002912">
    <property type="entry name" value="ACT_dom"/>
</dbReference>
<dbReference type="InterPro" id="IPR039557">
    <property type="entry name" value="AHAS_ACT"/>
</dbReference>
<dbReference type="InterPro" id="IPR054480">
    <property type="entry name" value="AHAS_small-like_ACT"/>
</dbReference>
<dbReference type="NCBIfam" id="TIGR00119">
    <property type="entry name" value="acolac_sm"/>
    <property type="match status" value="2"/>
</dbReference>
<dbReference type="NCBIfam" id="NF008864">
    <property type="entry name" value="PRK11895.1"/>
    <property type="match status" value="2"/>
</dbReference>
<dbReference type="PANTHER" id="PTHR30239">
    <property type="entry name" value="ACETOLACTATE SYNTHASE SMALL SUBUNIT"/>
    <property type="match status" value="1"/>
</dbReference>
<dbReference type="PANTHER" id="PTHR30239:SF0">
    <property type="entry name" value="ACETOLACTATE SYNTHASE SMALL SUBUNIT 1, CHLOROPLASTIC"/>
    <property type="match status" value="1"/>
</dbReference>
<dbReference type="Pfam" id="PF22629">
    <property type="entry name" value="ACT_AHAS_ss"/>
    <property type="match status" value="2"/>
</dbReference>
<dbReference type="Pfam" id="PF10369">
    <property type="entry name" value="ALS_ss_C"/>
    <property type="match status" value="2"/>
</dbReference>
<dbReference type="SUPFAM" id="SSF55021">
    <property type="entry name" value="ACT-like"/>
    <property type="match status" value="4"/>
</dbReference>
<dbReference type="PROSITE" id="PS51671">
    <property type="entry name" value="ACT"/>
    <property type="match status" value="2"/>
</dbReference>
<accession>Q9SMC2</accession>
<organism>
    <name type="scientific">Nicotiana plumbaginifolia</name>
    <name type="common">Leadwort-leaved tobacco</name>
    <name type="synonym">Tex-Mex tobacco</name>
    <dbReference type="NCBI Taxonomy" id="4092"/>
    <lineage>
        <taxon>Eukaryota</taxon>
        <taxon>Viridiplantae</taxon>
        <taxon>Streptophyta</taxon>
        <taxon>Embryophyta</taxon>
        <taxon>Tracheophyta</taxon>
        <taxon>Spermatophyta</taxon>
        <taxon>Magnoliopsida</taxon>
        <taxon>eudicotyledons</taxon>
        <taxon>Gunneridae</taxon>
        <taxon>Pentapetalae</taxon>
        <taxon>asterids</taxon>
        <taxon>lamiids</taxon>
        <taxon>Solanales</taxon>
        <taxon>Solanaceae</taxon>
        <taxon>Nicotianoideae</taxon>
        <taxon>Nicotianeae</taxon>
        <taxon>Nicotiana</taxon>
    </lineage>
</organism>
<evidence type="ECO:0000250" key="1"/>
<evidence type="ECO:0000255" key="2"/>
<evidence type="ECO:0000255" key="3">
    <source>
        <dbReference type="PROSITE-ProRule" id="PRU01007"/>
    </source>
</evidence>
<evidence type="ECO:0000269" key="4">
    <source>
    </source>
</evidence>
<evidence type="ECO:0000305" key="5"/>
<proteinExistence type="evidence at transcript level"/>
<keyword id="KW-0028">Amino-acid biosynthesis</keyword>
<keyword id="KW-0100">Branched-chain amino acid biosynthesis</keyword>
<keyword id="KW-0150">Chloroplast</keyword>
<keyword id="KW-0934">Plastid</keyword>
<keyword id="KW-0677">Repeat</keyword>
<keyword id="KW-0809">Transit peptide</keyword>
<comment type="function">
    <text evidence="4">Regulatory subunit of acetohydroxy-acid synthase. Probably involved in feedback inhibition by branched-chain amino acids. Not involved in herbicide tolerance.</text>
</comment>
<comment type="pathway">
    <text>Amino-acid biosynthesis; L-isoleucine biosynthesis; L-isoleucine from 2-oxobutanoate: step 1/4.</text>
</comment>
<comment type="pathway">
    <text>Amino-acid biosynthesis; L-valine biosynthesis; L-valine from pyruvate: step 1/4.</text>
</comment>
<comment type="subunit">
    <text evidence="1">The acetolactate synthase complex contains both large catalytic subunits and small regulatory subunits.</text>
</comment>
<comment type="subcellular location">
    <subcellularLocation>
        <location evidence="5">Plastid</location>
        <location evidence="5">Chloroplast</location>
    </subcellularLocation>
</comment>
<comment type="similarity">
    <text evidence="5">Belongs to the acetolactate synthase small subunit family.</text>
</comment>